<sequence>MHKVKLAAITCELPARSYENDDPVFAAVPDLSESWWQFWGVNRRGYFDPRNGENEFSLVVRAAERLLRSSDTAPDSVDMLICSASSPIMTDAGDVLPDLRGRLYPRMANVLSKQLGLSRALPLDSQMECASFLLNLRLAASMIRQGKAEKVLVVCSEYISNLLDFTSRTSTLFADGCAVALLTRGDDDSCDLLASAEHSDATFYEVATGRWRLPENPTGEAKPRLYFSLFSDGQNKMASFVPTNVPIAMRRALEKAGLGSDDIDYFVFHQPAPFLVKAWAEGIGARPEQYQLTMGDTGVMISVSIPYTLMTGLREGKIRPGDRIVMAGAATGWGFAAQVWQLGEVLVC</sequence>
<name>PQSC_PSEAE</name>
<feature type="chain" id="PRO_0000441875" description="2-heptyl-4(1H)-quinolone synthase subunit PqsC">
    <location>
        <begin position="1"/>
        <end position="348"/>
    </location>
</feature>
<feature type="active site" description="Acyl-thioester intermediate" evidence="5 6">
    <location>
        <position position="129"/>
    </location>
</feature>
<feature type="active site" evidence="6">
    <location>
        <position position="269"/>
    </location>
</feature>
<feature type="mutagenesis site" description="Loss of activity." evidence="1">
    <original>C</original>
    <variation>A</variation>
    <variation>S</variation>
    <location>
        <position position="129"/>
    </location>
</feature>
<feature type="mutagenesis site" description="Alters binding properties for both 2-ABA and 2-AA. Almost loss of activity." evidence="2">
    <original>H</original>
    <variation>A</variation>
    <location>
        <position position="269"/>
    </location>
</feature>
<feature type="mutagenesis site" description="Has significant activity toward the desamino substrate analog benzoylacetate." evidence="2">
    <original>V</original>
    <variation>N</variation>
    <location>
        <position position="299"/>
    </location>
</feature>
<feature type="strand" evidence="9">
    <location>
        <begin position="4"/>
        <end position="12"/>
    </location>
</feature>
<feature type="strand" evidence="9">
    <location>
        <begin position="17"/>
        <end position="19"/>
    </location>
</feature>
<feature type="helix" evidence="9">
    <location>
        <begin position="23"/>
        <end position="25"/>
    </location>
</feature>
<feature type="helix" evidence="9">
    <location>
        <begin position="33"/>
        <end position="39"/>
    </location>
</feature>
<feature type="strand" evidence="9">
    <location>
        <begin position="42"/>
        <end position="45"/>
    </location>
</feature>
<feature type="helix" evidence="9">
    <location>
        <begin position="49"/>
        <end position="51"/>
    </location>
</feature>
<feature type="helix" evidence="9">
    <location>
        <begin position="57"/>
        <end position="69"/>
    </location>
</feature>
<feature type="helix" evidence="9">
    <location>
        <begin position="74"/>
        <end position="76"/>
    </location>
</feature>
<feature type="strand" evidence="9">
    <location>
        <begin position="79"/>
        <end position="83"/>
    </location>
</feature>
<feature type="strand" evidence="9">
    <location>
        <begin position="85"/>
        <end position="87"/>
    </location>
</feature>
<feature type="turn" evidence="9">
    <location>
        <begin position="93"/>
        <end position="95"/>
    </location>
</feature>
<feature type="strand" evidence="9">
    <location>
        <begin position="101"/>
        <end position="105"/>
    </location>
</feature>
<feature type="helix" evidence="9">
    <location>
        <begin position="108"/>
        <end position="115"/>
    </location>
</feature>
<feature type="strand" evidence="9">
    <location>
        <begin position="121"/>
        <end position="124"/>
    </location>
</feature>
<feature type="helix" evidence="9">
    <location>
        <begin position="128"/>
        <end position="130"/>
    </location>
</feature>
<feature type="helix" evidence="9">
    <location>
        <begin position="131"/>
        <end position="144"/>
    </location>
</feature>
<feature type="strand" evidence="9">
    <location>
        <begin position="149"/>
        <end position="157"/>
    </location>
</feature>
<feature type="helix" evidence="9">
    <location>
        <begin position="159"/>
        <end position="162"/>
    </location>
</feature>
<feature type="helix" evidence="9">
    <location>
        <begin position="168"/>
        <end position="170"/>
    </location>
</feature>
<feature type="strand" evidence="9">
    <location>
        <begin position="171"/>
        <end position="173"/>
    </location>
</feature>
<feature type="strand" evidence="9">
    <location>
        <begin position="176"/>
        <end position="184"/>
    </location>
</feature>
<feature type="strand" evidence="9">
    <location>
        <begin position="186"/>
        <end position="199"/>
    </location>
</feature>
<feature type="helix" evidence="9">
    <location>
        <begin position="204"/>
        <end position="206"/>
    </location>
</feature>
<feature type="strand" evidence="9">
    <location>
        <begin position="207"/>
        <end position="212"/>
    </location>
</feature>
<feature type="strand" evidence="10">
    <location>
        <begin position="218"/>
        <end position="220"/>
    </location>
</feature>
<feature type="strand" evidence="9">
    <location>
        <begin position="224"/>
        <end position="229"/>
    </location>
</feature>
<feature type="helix" evidence="10">
    <location>
        <begin position="233"/>
        <end position="237"/>
    </location>
</feature>
<feature type="helix" evidence="9">
    <location>
        <begin position="240"/>
        <end position="256"/>
    </location>
</feature>
<feature type="helix" evidence="9">
    <location>
        <begin position="260"/>
        <end position="262"/>
    </location>
</feature>
<feature type="strand" evidence="9">
    <location>
        <begin position="264"/>
        <end position="268"/>
    </location>
</feature>
<feature type="helix" evidence="9">
    <location>
        <begin position="273"/>
        <end position="283"/>
    </location>
</feature>
<feature type="helix" evidence="9">
    <location>
        <begin position="287"/>
        <end position="289"/>
    </location>
</feature>
<feature type="helix" evidence="9">
    <location>
        <begin position="294"/>
        <end position="297"/>
    </location>
</feature>
<feature type="helix" evidence="9">
    <location>
        <begin position="301"/>
        <end position="303"/>
    </location>
</feature>
<feature type="helix" evidence="9">
    <location>
        <begin position="304"/>
        <end position="314"/>
    </location>
</feature>
<feature type="strand" evidence="9">
    <location>
        <begin position="323"/>
        <end position="330"/>
    </location>
</feature>
<feature type="turn" evidence="9">
    <location>
        <begin position="331"/>
        <end position="333"/>
    </location>
</feature>
<feature type="strand" evidence="9">
    <location>
        <begin position="334"/>
        <end position="341"/>
    </location>
</feature>
<keyword id="KW-0002">3D-structure</keyword>
<keyword id="KW-0012">Acyltransferase</keyword>
<keyword id="KW-0963">Cytoplasm</keyword>
<keyword id="KW-1185">Reference proteome</keyword>
<keyword id="KW-0808">Transferase</keyword>
<comment type="function">
    <text evidence="1 2">Required for the biosynthesis of the quorum-sensing signaling molecules 2-heptyl-4(1H)-quinolone (HHQ) and 2-heptyl-3-hydroxy-4(1H)-quinolone (Pseudomonas quinolone signal or PQS), which are important for biofilm formation and virulence. The PqsC/PqsB complex catalyzes the condensation of 2-aminobenzoylacetate (2-ABA) and octanoyl-CoA to form HHQ. First, PqsC acquires an octanoyl group from octanoyl-CoA and forms an octanoyl-PqsC intermediate. Then, together with PqsB, it catalyzes the coupling of 2-ABA with the octanoate group, leading to decarboxylation and dehydration, and resulting in closure of the quinoline ring.</text>
</comment>
<comment type="catalytic activity">
    <reaction evidence="1 2">
        <text>(2-aminobenzoyl)acetate + octanoyl-CoA + H(+) = 2-heptyl-4(1H)-quinolone + CO2 + CoA + H2O</text>
        <dbReference type="Rhea" id="RHEA:50396"/>
        <dbReference type="ChEBI" id="CHEBI:15377"/>
        <dbReference type="ChEBI" id="CHEBI:15378"/>
        <dbReference type="ChEBI" id="CHEBI:16526"/>
        <dbReference type="ChEBI" id="CHEBI:57287"/>
        <dbReference type="ChEBI" id="CHEBI:57386"/>
        <dbReference type="ChEBI" id="CHEBI:62219"/>
        <dbReference type="ChEBI" id="CHEBI:131446"/>
        <dbReference type="EC" id="2.3.1.230"/>
    </reaction>
</comment>
<comment type="activity regulation">
    <text evidence="1 2">Folding of PqsC and binding of octanoate are promoted by PqsB (PubMed:24239007). Binding of the octanoyl group probably increases the binding affinity of the complex for 2-ABA (PubMed:26811339). Activity of the complex is inhibited by 2-aminoacetophenone (2-AA) (PubMed:26811339).</text>
</comment>
<comment type="biophysicochemical properties">
    <kinetics>
        <KM evidence="2">6 uM for octanoyl-CoA (in the presence of PqsB)</KM>
        <KM evidence="2">105 uM for 2-ABA (in the presence of PqsB)</KM>
        <text evidence="2">kcat is 6.8 sec(-1).</text>
    </kinetics>
</comment>
<comment type="subunit">
    <text evidence="1 2">Forms a tight complex with PqsB.</text>
</comment>
<comment type="subcellular location">
    <subcellularLocation>
        <location evidence="1">Cytoplasm</location>
    </subcellularLocation>
</comment>
<comment type="similarity">
    <text evidence="4">Belongs to the thiolase-like superfamily. FabH family.</text>
</comment>
<gene>
    <name evidence="3" type="primary">pqsC</name>
    <name evidence="7" type="ordered locus">PA0998</name>
</gene>
<reference key="1">
    <citation type="journal article" date="2000" name="Nature">
        <title>Complete genome sequence of Pseudomonas aeruginosa PAO1, an opportunistic pathogen.</title>
        <authorList>
            <person name="Stover C.K."/>
            <person name="Pham X.-Q.T."/>
            <person name="Erwin A.L."/>
            <person name="Mizoguchi S.D."/>
            <person name="Warrener P."/>
            <person name="Hickey M.J."/>
            <person name="Brinkman F.S.L."/>
            <person name="Hufnagle W.O."/>
            <person name="Kowalik D.J."/>
            <person name="Lagrou M."/>
            <person name="Garber R.L."/>
            <person name="Goltry L."/>
            <person name="Tolentino E."/>
            <person name="Westbrock-Wadman S."/>
            <person name="Yuan Y."/>
            <person name="Brody L.L."/>
            <person name="Coulter S.N."/>
            <person name="Folger K.R."/>
            <person name="Kas A."/>
            <person name="Larbig K."/>
            <person name="Lim R.M."/>
            <person name="Smith K.A."/>
            <person name="Spencer D.H."/>
            <person name="Wong G.K.-S."/>
            <person name="Wu Z."/>
            <person name="Paulsen I.T."/>
            <person name="Reizer J."/>
            <person name="Saier M.H. Jr."/>
            <person name="Hancock R.E.W."/>
            <person name="Lory S."/>
            <person name="Olson M.V."/>
        </authorList>
    </citation>
    <scope>NUCLEOTIDE SEQUENCE [LARGE SCALE GENOMIC DNA]</scope>
    <source>
        <strain>ATCC 15692 / DSM 22644 / CIP 104116 / JCM 14847 / LMG 12228 / 1C / PRS 101 / PAO1</strain>
    </source>
</reference>
<reference key="2">
    <citation type="journal article" date="2013" name="Chem. Biol.">
        <title>The end of an old hypothesis: the Pseudomonas signaling molecules 4-hydroxy-2-alkylquinolines derive from fatty acids, not 3-ketofatty acids.</title>
        <authorList>
            <person name="Dulcey C.E."/>
            <person name="Dekimpe V."/>
            <person name="Fauvelle D.A."/>
            <person name="Milot S."/>
            <person name="Groleau M.C."/>
            <person name="Doucet N."/>
            <person name="Rahme L.G."/>
            <person name="Lepine F."/>
            <person name="Deziel E."/>
        </authorList>
    </citation>
    <scope>FUNCTION</scope>
    <scope>CATALYTIC ACTIVITY</scope>
    <scope>ACTIVITY REGULATION</scope>
    <scope>SUBUNIT</scope>
    <scope>SUBCELLULAR LOCATION</scope>
    <scope>ACTIVE SITE</scope>
    <scope>MUTAGENESIS OF CYS-129</scope>
    <scope>IDENTIFICATION BY MASS SPECTROMETRY</scope>
    <source>
        <strain>PA14</strain>
    </source>
</reference>
<reference evidence="8" key="3">
    <citation type="journal article" date="2016" name="J. Biol. Chem.">
        <title>PqsBC, a condensing enzyme in the biosynthesis of the Pseudomonas aeruginosa quinolone signal: crystal structure, inhibition, and reaction mechanism.</title>
        <authorList>
            <person name="Drees S.L."/>
            <person name="Li C."/>
            <person name="Prasetya F."/>
            <person name="Saleem M."/>
            <person name="Dreveny I."/>
            <person name="Williams P."/>
            <person name="Hennecke U."/>
            <person name="Emsley J."/>
            <person name="Fetzner S."/>
        </authorList>
    </citation>
    <scope>X-RAY CRYSTALLOGRAPHY (2.04 ANGSTROMS) OF 2-348 IN COMPLEX WITH PQSB</scope>
    <scope>FUNCTION</scope>
    <scope>CATALYTIC ACTIVITY</scope>
    <scope>ACTIVITY REGULATION</scope>
    <scope>BIOPHYSICOCHEMICAL PROPERTIES</scope>
    <scope>SUBUNIT</scope>
    <scope>ACTIVE SITE</scope>
    <scope>MUTAGENESIS OF HIS-269 AND VAL-299</scope>
    <source>
        <strain>ATCC 15692 / DSM 22644 / CIP 104116 / JCM 14847 / LMG 12228 / 1C / PRS 101 / PAO1</strain>
    </source>
</reference>
<accession>Q9I4X1</accession>
<protein>
    <recommendedName>
        <fullName evidence="4">2-heptyl-4(1H)-quinolone synthase subunit PqsC</fullName>
        <ecNumber evidence="1 2">2.3.1.230</ecNumber>
    </recommendedName>
</protein>
<dbReference type="EC" id="2.3.1.230" evidence="1 2"/>
<dbReference type="EMBL" id="AE004091">
    <property type="protein sequence ID" value="AAG04387.1"/>
    <property type="molecule type" value="Genomic_DNA"/>
</dbReference>
<dbReference type="PIR" id="A83522">
    <property type="entry name" value="A83522"/>
</dbReference>
<dbReference type="RefSeq" id="NP_249689.1">
    <property type="nucleotide sequence ID" value="NC_002516.2"/>
</dbReference>
<dbReference type="RefSeq" id="WP_003108612.1">
    <property type="nucleotide sequence ID" value="NZ_QZGE01000006.1"/>
</dbReference>
<dbReference type="PDB" id="5DWZ">
    <property type="method" value="X-ray"/>
    <property type="resolution" value="2.04 A"/>
    <property type="chains" value="C/D/F/H=2-348"/>
</dbReference>
<dbReference type="PDB" id="6ESZ">
    <property type="method" value="X-ray"/>
    <property type="resolution" value="1.84 A"/>
    <property type="chains" value="A/C=1-348"/>
</dbReference>
<dbReference type="PDB" id="6ET0">
    <property type="method" value="X-ray"/>
    <property type="resolution" value="1.53 A"/>
    <property type="chains" value="A/C=1-348"/>
</dbReference>
<dbReference type="PDB" id="6ET1">
    <property type="method" value="X-ray"/>
    <property type="resolution" value="2.65 A"/>
    <property type="chains" value="A/C/E/G=1-348"/>
</dbReference>
<dbReference type="PDB" id="6ET2">
    <property type="method" value="X-ray"/>
    <property type="resolution" value="2.60 A"/>
    <property type="chains" value="A/C/E/G/I/K/M/O=1-348"/>
</dbReference>
<dbReference type="PDB" id="6ET3">
    <property type="method" value="X-ray"/>
    <property type="resolution" value="2.25 A"/>
    <property type="chains" value="A/C=1-348"/>
</dbReference>
<dbReference type="PDBsum" id="5DWZ"/>
<dbReference type="PDBsum" id="6ESZ"/>
<dbReference type="PDBsum" id="6ET0"/>
<dbReference type="PDBsum" id="6ET1"/>
<dbReference type="PDBsum" id="6ET2"/>
<dbReference type="PDBsum" id="6ET3"/>
<dbReference type="SMR" id="Q9I4X1"/>
<dbReference type="STRING" id="208964.PA0998"/>
<dbReference type="PaxDb" id="208964-PA0998"/>
<dbReference type="DNASU" id="880660"/>
<dbReference type="GeneID" id="880660"/>
<dbReference type="KEGG" id="pae:PA0998"/>
<dbReference type="PATRIC" id="fig|208964.12.peg.1030"/>
<dbReference type="PseudoCAP" id="PA0998"/>
<dbReference type="HOGENOM" id="CLU_039592_1_0_6"/>
<dbReference type="InParanoid" id="Q9I4X1"/>
<dbReference type="OrthoDB" id="9815506at2"/>
<dbReference type="PhylomeDB" id="Q9I4X1"/>
<dbReference type="BioCyc" id="MetaCyc:MONOMER-19873"/>
<dbReference type="BioCyc" id="PAER208964:G1FZ6-1017-MONOMER"/>
<dbReference type="BRENDA" id="2.3.1.230">
    <property type="organism ID" value="5087"/>
</dbReference>
<dbReference type="BRENDA" id="2.3.1.B38">
    <property type="organism ID" value="5087"/>
</dbReference>
<dbReference type="EvolutionaryTrace" id="Q9I4X1"/>
<dbReference type="Proteomes" id="UP000002438">
    <property type="component" value="Chromosome"/>
</dbReference>
<dbReference type="GO" id="GO:0005737">
    <property type="term" value="C:cytoplasm"/>
    <property type="evidence" value="ECO:0007669"/>
    <property type="project" value="UniProtKB-SubCell"/>
</dbReference>
<dbReference type="GO" id="GO:0004315">
    <property type="term" value="F:3-oxoacyl-[acyl-carrier-protein] synthase activity"/>
    <property type="evidence" value="ECO:0007669"/>
    <property type="project" value="InterPro"/>
</dbReference>
<dbReference type="GO" id="GO:0006633">
    <property type="term" value="P:fatty acid biosynthetic process"/>
    <property type="evidence" value="ECO:0007669"/>
    <property type="project" value="InterPro"/>
</dbReference>
<dbReference type="GO" id="GO:0044550">
    <property type="term" value="P:secondary metabolite biosynthetic process"/>
    <property type="evidence" value="ECO:0000315"/>
    <property type="project" value="PseudoCAP"/>
</dbReference>
<dbReference type="Gene3D" id="3.40.47.10">
    <property type="match status" value="2"/>
</dbReference>
<dbReference type="InterPro" id="IPR013747">
    <property type="entry name" value="ACP_syn_III_C"/>
</dbReference>
<dbReference type="InterPro" id="IPR013751">
    <property type="entry name" value="ACP_syn_III_N"/>
</dbReference>
<dbReference type="InterPro" id="IPR016039">
    <property type="entry name" value="Thiolase-like"/>
</dbReference>
<dbReference type="PANTHER" id="PTHR34069">
    <property type="entry name" value="3-OXOACYL-[ACYL-CARRIER-PROTEIN] SYNTHASE 3"/>
    <property type="match status" value="1"/>
</dbReference>
<dbReference type="PANTHER" id="PTHR34069:SF2">
    <property type="entry name" value="BETA-KETOACYL-[ACYL-CARRIER-PROTEIN] SYNTHASE III"/>
    <property type="match status" value="1"/>
</dbReference>
<dbReference type="Pfam" id="PF08545">
    <property type="entry name" value="ACP_syn_III"/>
    <property type="match status" value="1"/>
</dbReference>
<dbReference type="Pfam" id="PF08541">
    <property type="entry name" value="ACP_syn_III_C"/>
    <property type="match status" value="1"/>
</dbReference>
<dbReference type="SUPFAM" id="SSF53901">
    <property type="entry name" value="Thiolase-like"/>
    <property type="match status" value="1"/>
</dbReference>
<proteinExistence type="evidence at protein level"/>
<evidence type="ECO:0000269" key="1">
    <source>
    </source>
</evidence>
<evidence type="ECO:0000269" key="2">
    <source>
    </source>
</evidence>
<evidence type="ECO:0000303" key="3">
    <source>
    </source>
</evidence>
<evidence type="ECO:0000305" key="4"/>
<evidence type="ECO:0000305" key="5">
    <source>
    </source>
</evidence>
<evidence type="ECO:0000305" key="6">
    <source>
    </source>
</evidence>
<evidence type="ECO:0000312" key="7">
    <source>
        <dbReference type="EMBL" id="AAG04387.1"/>
    </source>
</evidence>
<evidence type="ECO:0007744" key="8">
    <source>
        <dbReference type="PDB" id="5DWZ"/>
    </source>
</evidence>
<evidence type="ECO:0007829" key="9">
    <source>
        <dbReference type="PDB" id="6ET0"/>
    </source>
</evidence>
<evidence type="ECO:0007829" key="10">
    <source>
        <dbReference type="PDB" id="6ET3"/>
    </source>
</evidence>
<organism>
    <name type="scientific">Pseudomonas aeruginosa (strain ATCC 15692 / DSM 22644 / CIP 104116 / JCM 14847 / LMG 12228 / 1C / PRS 101 / PAO1)</name>
    <dbReference type="NCBI Taxonomy" id="208964"/>
    <lineage>
        <taxon>Bacteria</taxon>
        <taxon>Pseudomonadati</taxon>
        <taxon>Pseudomonadota</taxon>
        <taxon>Gammaproteobacteria</taxon>
        <taxon>Pseudomonadales</taxon>
        <taxon>Pseudomonadaceae</taxon>
        <taxon>Pseudomonas</taxon>
    </lineage>
</organism>